<protein>
    <recommendedName>
        <fullName evidence="1">GTPase Der</fullName>
    </recommendedName>
    <alternativeName>
        <fullName evidence="1">GTP-binding protein EngA</fullName>
    </alternativeName>
</protein>
<proteinExistence type="inferred from homology"/>
<accession>A9KWW9</accession>
<gene>
    <name evidence="1" type="primary">der</name>
    <name type="synonym">engA</name>
    <name type="ordered locus">Sbal195_3144</name>
</gene>
<evidence type="ECO:0000255" key="1">
    <source>
        <dbReference type="HAMAP-Rule" id="MF_00195"/>
    </source>
</evidence>
<evidence type="ECO:0000256" key="2">
    <source>
        <dbReference type="SAM" id="MobiDB-lite"/>
    </source>
</evidence>
<feature type="chain" id="PRO_1000077672" description="GTPase Der">
    <location>
        <begin position="1"/>
        <end position="488"/>
    </location>
</feature>
<feature type="domain" description="EngA-type G 1">
    <location>
        <begin position="3"/>
        <end position="166"/>
    </location>
</feature>
<feature type="domain" description="EngA-type G 2">
    <location>
        <begin position="199"/>
        <end position="372"/>
    </location>
</feature>
<feature type="domain" description="KH-like" evidence="1">
    <location>
        <begin position="373"/>
        <end position="457"/>
    </location>
</feature>
<feature type="region of interest" description="Disordered" evidence="2">
    <location>
        <begin position="460"/>
        <end position="488"/>
    </location>
</feature>
<feature type="compositionally biased region" description="Basic residues" evidence="2">
    <location>
        <begin position="473"/>
        <end position="488"/>
    </location>
</feature>
<feature type="binding site" evidence="1">
    <location>
        <begin position="9"/>
        <end position="16"/>
    </location>
    <ligand>
        <name>GTP</name>
        <dbReference type="ChEBI" id="CHEBI:37565"/>
        <label>1</label>
    </ligand>
</feature>
<feature type="binding site" evidence="1">
    <location>
        <begin position="56"/>
        <end position="60"/>
    </location>
    <ligand>
        <name>GTP</name>
        <dbReference type="ChEBI" id="CHEBI:37565"/>
        <label>1</label>
    </ligand>
</feature>
<feature type="binding site" evidence="1">
    <location>
        <begin position="118"/>
        <end position="121"/>
    </location>
    <ligand>
        <name>GTP</name>
        <dbReference type="ChEBI" id="CHEBI:37565"/>
        <label>1</label>
    </ligand>
</feature>
<feature type="binding site" evidence="1">
    <location>
        <begin position="205"/>
        <end position="212"/>
    </location>
    <ligand>
        <name>GTP</name>
        <dbReference type="ChEBI" id="CHEBI:37565"/>
        <label>2</label>
    </ligand>
</feature>
<feature type="binding site" evidence="1">
    <location>
        <begin position="252"/>
        <end position="256"/>
    </location>
    <ligand>
        <name>GTP</name>
        <dbReference type="ChEBI" id="CHEBI:37565"/>
        <label>2</label>
    </ligand>
</feature>
<feature type="binding site" evidence="1">
    <location>
        <begin position="317"/>
        <end position="320"/>
    </location>
    <ligand>
        <name>GTP</name>
        <dbReference type="ChEBI" id="CHEBI:37565"/>
        <label>2</label>
    </ligand>
</feature>
<comment type="function">
    <text evidence="1">GTPase that plays an essential role in the late steps of ribosome biogenesis.</text>
</comment>
<comment type="subunit">
    <text evidence="1">Associates with the 50S ribosomal subunit.</text>
</comment>
<comment type="similarity">
    <text evidence="1">Belongs to the TRAFAC class TrmE-Era-EngA-EngB-Septin-like GTPase superfamily. EngA (Der) GTPase family.</text>
</comment>
<name>DER_SHEB9</name>
<keyword id="KW-0342">GTP-binding</keyword>
<keyword id="KW-0547">Nucleotide-binding</keyword>
<keyword id="KW-0677">Repeat</keyword>
<keyword id="KW-0690">Ribosome biogenesis</keyword>
<organism>
    <name type="scientific">Shewanella baltica (strain OS195)</name>
    <dbReference type="NCBI Taxonomy" id="399599"/>
    <lineage>
        <taxon>Bacteria</taxon>
        <taxon>Pseudomonadati</taxon>
        <taxon>Pseudomonadota</taxon>
        <taxon>Gammaproteobacteria</taxon>
        <taxon>Alteromonadales</taxon>
        <taxon>Shewanellaceae</taxon>
        <taxon>Shewanella</taxon>
    </lineage>
</organism>
<dbReference type="EMBL" id="CP000891">
    <property type="protein sequence ID" value="ABX50306.1"/>
    <property type="molecule type" value="Genomic_DNA"/>
</dbReference>
<dbReference type="RefSeq" id="WP_006082478.1">
    <property type="nucleotide sequence ID" value="NC_009997.1"/>
</dbReference>
<dbReference type="SMR" id="A9KWW9"/>
<dbReference type="GeneID" id="11773200"/>
<dbReference type="KEGG" id="sbn:Sbal195_3144"/>
<dbReference type="HOGENOM" id="CLU_016077_5_1_6"/>
<dbReference type="Proteomes" id="UP000000770">
    <property type="component" value="Chromosome"/>
</dbReference>
<dbReference type="GO" id="GO:0005525">
    <property type="term" value="F:GTP binding"/>
    <property type="evidence" value="ECO:0007669"/>
    <property type="project" value="UniProtKB-UniRule"/>
</dbReference>
<dbReference type="GO" id="GO:0043022">
    <property type="term" value="F:ribosome binding"/>
    <property type="evidence" value="ECO:0007669"/>
    <property type="project" value="TreeGrafter"/>
</dbReference>
<dbReference type="GO" id="GO:0042254">
    <property type="term" value="P:ribosome biogenesis"/>
    <property type="evidence" value="ECO:0007669"/>
    <property type="project" value="UniProtKB-KW"/>
</dbReference>
<dbReference type="CDD" id="cd01894">
    <property type="entry name" value="EngA1"/>
    <property type="match status" value="1"/>
</dbReference>
<dbReference type="CDD" id="cd01895">
    <property type="entry name" value="EngA2"/>
    <property type="match status" value="1"/>
</dbReference>
<dbReference type="FunFam" id="3.30.300.20:FF:000004">
    <property type="entry name" value="GTPase Der"/>
    <property type="match status" value="1"/>
</dbReference>
<dbReference type="FunFam" id="3.40.50.300:FF:000040">
    <property type="entry name" value="GTPase Der"/>
    <property type="match status" value="1"/>
</dbReference>
<dbReference type="FunFam" id="3.40.50.300:FF:000057">
    <property type="entry name" value="GTPase Der"/>
    <property type="match status" value="1"/>
</dbReference>
<dbReference type="Gene3D" id="3.30.300.20">
    <property type="match status" value="1"/>
</dbReference>
<dbReference type="Gene3D" id="3.40.50.300">
    <property type="entry name" value="P-loop containing nucleotide triphosphate hydrolases"/>
    <property type="match status" value="2"/>
</dbReference>
<dbReference type="HAMAP" id="MF_00195">
    <property type="entry name" value="GTPase_Der"/>
    <property type="match status" value="1"/>
</dbReference>
<dbReference type="InterPro" id="IPR031166">
    <property type="entry name" value="G_ENGA"/>
</dbReference>
<dbReference type="InterPro" id="IPR006073">
    <property type="entry name" value="GTP-bd"/>
</dbReference>
<dbReference type="InterPro" id="IPR016484">
    <property type="entry name" value="GTPase_Der"/>
</dbReference>
<dbReference type="InterPro" id="IPR032859">
    <property type="entry name" value="KH_dom-like"/>
</dbReference>
<dbReference type="InterPro" id="IPR015946">
    <property type="entry name" value="KH_dom-like_a/b"/>
</dbReference>
<dbReference type="InterPro" id="IPR027417">
    <property type="entry name" value="P-loop_NTPase"/>
</dbReference>
<dbReference type="InterPro" id="IPR005225">
    <property type="entry name" value="Small_GTP-bd"/>
</dbReference>
<dbReference type="NCBIfam" id="TIGR03594">
    <property type="entry name" value="GTPase_EngA"/>
    <property type="match status" value="1"/>
</dbReference>
<dbReference type="NCBIfam" id="TIGR00231">
    <property type="entry name" value="small_GTP"/>
    <property type="match status" value="2"/>
</dbReference>
<dbReference type="PANTHER" id="PTHR43834">
    <property type="entry name" value="GTPASE DER"/>
    <property type="match status" value="1"/>
</dbReference>
<dbReference type="PANTHER" id="PTHR43834:SF6">
    <property type="entry name" value="GTPASE DER"/>
    <property type="match status" value="1"/>
</dbReference>
<dbReference type="Pfam" id="PF14714">
    <property type="entry name" value="KH_dom-like"/>
    <property type="match status" value="1"/>
</dbReference>
<dbReference type="Pfam" id="PF01926">
    <property type="entry name" value="MMR_HSR1"/>
    <property type="match status" value="2"/>
</dbReference>
<dbReference type="PIRSF" id="PIRSF006485">
    <property type="entry name" value="GTP-binding_EngA"/>
    <property type="match status" value="1"/>
</dbReference>
<dbReference type="PRINTS" id="PR00326">
    <property type="entry name" value="GTP1OBG"/>
</dbReference>
<dbReference type="SUPFAM" id="SSF52540">
    <property type="entry name" value="P-loop containing nucleoside triphosphate hydrolases"/>
    <property type="match status" value="2"/>
</dbReference>
<dbReference type="PROSITE" id="PS51712">
    <property type="entry name" value="G_ENGA"/>
    <property type="match status" value="2"/>
</dbReference>
<sequence length="488" mass="54634">MIPVVALVGRPNVGKSTLFNRLTRTRDALVADFPGLTRDRKYGRAFLSGYEFIVVDTGGIDGTEEGIETKMAEQSLAAIEEADVVLFMTDARAGLTAADLSIAQHLRSREKTTFVVANKVDGIDADSACAEFWSLGLGEVYQMAASQGRGVTNMIEYALTPYAEAMGIVRQGEDEVTEEREYTEEEAEAEQKRLQDLPIKLAIIGKPNVGKSTLTNRILGEERVVVFDEPGTTRDSIYIPMEREGREYVIIDTAGVRRRSKVHQVIEKFSVIKTLKAVEDANVVLLIIDAREGIAEQDLGLLGFALNAGRALVIAVNKWDGIDQGIKDRVKSELDRRLGFIDFARIHFISALHGTGVGHLFESIEEAYDSATRRVSTSMLTRIMQMSQDDHQPPLVNGRRVKLKYAHAGGYNPPIVVIHGNQVSRLPDSYKRYMMNYFRRSLKVVGTPIQLRFQEGDNPFENKTEKLTMSQERRRKRAQSHIKDRKTK</sequence>
<reference key="1">
    <citation type="submission" date="2007-11" db="EMBL/GenBank/DDBJ databases">
        <title>Complete sequence of chromosome of Shewanella baltica OS195.</title>
        <authorList>
            <consortium name="US DOE Joint Genome Institute"/>
            <person name="Copeland A."/>
            <person name="Lucas S."/>
            <person name="Lapidus A."/>
            <person name="Barry K."/>
            <person name="Glavina del Rio T."/>
            <person name="Dalin E."/>
            <person name="Tice H."/>
            <person name="Pitluck S."/>
            <person name="Chain P."/>
            <person name="Malfatti S."/>
            <person name="Shin M."/>
            <person name="Vergez L."/>
            <person name="Schmutz J."/>
            <person name="Larimer F."/>
            <person name="Land M."/>
            <person name="Hauser L."/>
            <person name="Kyrpides N."/>
            <person name="Kim E."/>
            <person name="Brettar I."/>
            <person name="Rodrigues J."/>
            <person name="Konstantinidis K."/>
            <person name="Klappenbach J."/>
            <person name="Hofle M."/>
            <person name="Tiedje J."/>
            <person name="Richardson P."/>
        </authorList>
    </citation>
    <scope>NUCLEOTIDE SEQUENCE [LARGE SCALE GENOMIC DNA]</scope>
    <source>
        <strain>OS195</strain>
    </source>
</reference>